<evidence type="ECO:0000255" key="1">
    <source>
        <dbReference type="PROSITE-ProRule" id="PRU01182"/>
    </source>
</evidence>
<evidence type="ECO:0000305" key="2"/>
<feature type="chain" id="PRO_1000089868" description="UPF0758 protein STER_1430">
    <location>
        <begin position="1"/>
        <end position="228"/>
    </location>
</feature>
<feature type="domain" description="MPN" evidence="1">
    <location>
        <begin position="103"/>
        <end position="225"/>
    </location>
</feature>
<feature type="short sequence motif" description="JAMM motif" evidence="1">
    <location>
        <begin position="174"/>
        <end position="187"/>
    </location>
</feature>
<feature type="binding site" evidence="1">
    <location>
        <position position="174"/>
    </location>
    <ligand>
        <name>Zn(2+)</name>
        <dbReference type="ChEBI" id="CHEBI:29105"/>
        <note>catalytic</note>
    </ligand>
</feature>
<feature type="binding site" evidence="1">
    <location>
        <position position="176"/>
    </location>
    <ligand>
        <name>Zn(2+)</name>
        <dbReference type="ChEBI" id="CHEBI:29105"/>
        <note>catalytic</note>
    </ligand>
</feature>
<feature type="binding site" evidence="1">
    <location>
        <position position="187"/>
    </location>
    <ligand>
        <name>Zn(2+)</name>
        <dbReference type="ChEBI" id="CHEBI:29105"/>
        <note>catalytic</note>
    </ligand>
</feature>
<proteinExistence type="inferred from homology"/>
<keyword id="KW-0378">Hydrolase</keyword>
<keyword id="KW-0479">Metal-binding</keyword>
<keyword id="KW-0482">Metalloprotease</keyword>
<keyword id="KW-0645">Protease</keyword>
<keyword id="KW-0862">Zinc</keyword>
<gene>
    <name type="ordered locus">STER_1430</name>
</gene>
<name>Y1430_STRTD</name>
<dbReference type="EMBL" id="CP000419">
    <property type="protein sequence ID" value="ABJ66592.1"/>
    <property type="molecule type" value="Genomic_DNA"/>
</dbReference>
<dbReference type="SMR" id="Q03JN0"/>
<dbReference type="KEGG" id="ste:STER_1430"/>
<dbReference type="HOGENOM" id="CLU_073529_0_2_9"/>
<dbReference type="GO" id="GO:0046872">
    <property type="term" value="F:metal ion binding"/>
    <property type="evidence" value="ECO:0007669"/>
    <property type="project" value="UniProtKB-KW"/>
</dbReference>
<dbReference type="GO" id="GO:0008237">
    <property type="term" value="F:metallopeptidase activity"/>
    <property type="evidence" value="ECO:0007669"/>
    <property type="project" value="UniProtKB-KW"/>
</dbReference>
<dbReference type="GO" id="GO:0006508">
    <property type="term" value="P:proteolysis"/>
    <property type="evidence" value="ECO:0007669"/>
    <property type="project" value="UniProtKB-KW"/>
</dbReference>
<dbReference type="CDD" id="cd08071">
    <property type="entry name" value="MPN_DUF2466"/>
    <property type="match status" value="1"/>
</dbReference>
<dbReference type="Gene3D" id="3.40.140.10">
    <property type="entry name" value="Cytidine Deaminase, domain 2"/>
    <property type="match status" value="1"/>
</dbReference>
<dbReference type="InterPro" id="IPR037518">
    <property type="entry name" value="MPN"/>
</dbReference>
<dbReference type="InterPro" id="IPR025657">
    <property type="entry name" value="RadC_JAB"/>
</dbReference>
<dbReference type="InterPro" id="IPR010994">
    <property type="entry name" value="RuvA_2-like"/>
</dbReference>
<dbReference type="InterPro" id="IPR001405">
    <property type="entry name" value="UPF0758"/>
</dbReference>
<dbReference type="InterPro" id="IPR020891">
    <property type="entry name" value="UPF0758_CS"/>
</dbReference>
<dbReference type="InterPro" id="IPR046778">
    <property type="entry name" value="UPF0758_N"/>
</dbReference>
<dbReference type="NCBIfam" id="NF000642">
    <property type="entry name" value="PRK00024.1"/>
    <property type="match status" value="1"/>
</dbReference>
<dbReference type="NCBIfam" id="TIGR00608">
    <property type="entry name" value="radc"/>
    <property type="match status" value="1"/>
</dbReference>
<dbReference type="PANTHER" id="PTHR30471">
    <property type="entry name" value="DNA REPAIR PROTEIN RADC"/>
    <property type="match status" value="1"/>
</dbReference>
<dbReference type="PANTHER" id="PTHR30471:SF3">
    <property type="entry name" value="UPF0758 PROTEIN YEES-RELATED"/>
    <property type="match status" value="1"/>
</dbReference>
<dbReference type="Pfam" id="PF04002">
    <property type="entry name" value="RadC"/>
    <property type="match status" value="1"/>
</dbReference>
<dbReference type="Pfam" id="PF20582">
    <property type="entry name" value="UPF0758_N"/>
    <property type="match status" value="1"/>
</dbReference>
<dbReference type="SUPFAM" id="SSF102712">
    <property type="entry name" value="JAB1/MPN domain"/>
    <property type="match status" value="1"/>
</dbReference>
<dbReference type="SUPFAM" id="SSF47781">
    <property type="entry name" value="RuvA domain 2-like"/>
    <property type="match status" value="1"/>
</dbReference>
<dbReference type="PROSITE" id="PS50249">
    <property type="entry name" value="MPN"/>
    <property type="match status" value="1"/>
</dbReference>
<dbReference type="PROSITE" id="PS01302">
    <property type="entry name" value="UPF0758"/>
    <property type="match status" value="1"/>
</dbReference>
<organism>
    <name type="scientific">Streptococcus thermophilus (strain ATCC BAA-491 / LMD-9)</name>
    <dbReference type="NCBI Taxonomy" id="322159"/>
    <lineage>
        <taxon>Bacteria</taxon>
        <taxon>Bacillati</taxon>
        <taxon>Bacillota</taxon>
        <taxon>Bacilli</taxon>
        <taxon>Lactobacillales</taxon>
        <taxon>Streptococcaceae</taxon>
        <taxon>Streptococcus</taxon>
    </lineage>
</organism>
<comment type="similarity">
    <text evidence="2">Belongs to the UPF0758 family.</text>
</comment>
<reference key="1">
    <citation type="journal article" date="2006" name="Proc. Natl. Acad. Sci. U.S.A.">
        <title>Comparative genomics of the lactic acid bacteria.</title>
        <authorList>
            <person name="Makarova K.S."/>
            <person name="Slesarev A."/>
            <person name="Wolf Y.I."/>
            <person name="Sorokin A."/>
            <person name="Mirkin B."/>
            <person name="Koonin E.V."/>
            <person name="Pavlov A."/>
            <person name="Pavlova N."/>
            <person name="Karamychev V."/>
            <person name="Polouchine N."/>
            <person name="Shakhova V."/>
            <person name="Grigoriev I."/>
            <person name="Lou Y."/>
            <person name="Rohksar D."/>
            <person name="Lucas S."/>
            <person name="Huang K."/>
            <person name="Goodstein D.M."/>
            <person name="Hawkins T."/>
            <person name="Plengvidhya V."/>
            <person name="Welker D."/>
            <person name="Hughes J."/>
            <person name="Goh Y."/>
            <person name="Benson A."/>
            <person name="Baldwin K."/>
            <person name="Lee J.-H."/>
            <person name="Diaz-Muniz I."/>
            <person name="Dosti B."/>
            <person name="Smeianov V."/>
            <person name="Wechter W."/>
            <person name="Barabote R."/>
            <person name="Lorca G."/>
            <person name="Altermann E."/>
            <person name="Barrangou R."/>
            <person name="Ganesan B."/>
            <person name="Xie Y."/>
            <person name="Rawsthorne H."/>
            <person name="Tamir D."/>
            <person name="Parker C."/>
            <person name="Breidt F."/>
            <person name="Broadbent J.R."/>
            <person name="Hutkins R."/>
            <person name="O'Sullivan D."/>
            <person name="Steele J."/>
            <person name="Unlu G."/>
            <person name="Saier M.H. Jr."/>
            <person name="Klaenhammer T."/>
            <person name="Richardson P."/>
            <person name="Kozyavkin S."/>
            <person name="Weimer B.C."/>
            <person name="Mills D.A."/>
        </authorList>
    </citation>
    <scope>NUCLEOTIDE SEQUENCE [LARGE SCALE GENOMIC DNA]</scope>
    <source>
        <strain>ATCC BAA-491 / LMD-9</strain>
    </source>
</reference>
<accession>Q03JN0</accession>
<protein>
    <recommendedName>
        <fullName>UPF0758 protein STER_1430</fullName>
    </recommendedName>
</protein>
<sequence>MYSIVAEESGLLPRERLLQKGAEVLSDQELLAIVLRTGTRSESVLSMANRILKGMTSLADLSRLSLNELQKIPGIGRVKSIELKAMVELAKRIEKAELARSEQIMSSQQVARRMMLDIGDKPQEHLVAIYLDTQNRIIQQKTVFIGGVRRSIAEPREILHYACHLMATSLIVVHNHPSGEAYPSRNDIDFTQKIKRSCDDLGICLLDHLIVGKSTYYSFREEREDFEL</sequence>